<feature type="chain" id="PRO_1000192089" description="UDP-N-acetylmuramate--L-alanine ligase">
    <location>
        <begin position="1"/>
        <end position="518"/>
    </location>
</feature>
<feature type="binding site" evidence="1">
    <location>
        <begin position="158"/>
        <end position="164"/>
    </location>
    <ligand>
        <name>ATP</name>
        <dbReference type="ChEBI" id="CHEBI:30616"/>
    </ligand>
</feature>
<comment type="function">
    <text evidence="1">Cell wall formation.</text>
</comment>
<comment type="catalytic activity">
    <reaction evidence="1">
        <text>UDP-N-acetyl-alpha-D-muramate + L-alanine + ATP = UDP-N-acetyl-alpha-D-muramoyl-L-alanine + ADP + phosphate + H(+)</text>
        <dbReference type="Rhea" id="RHEA:23372"/>
        <dbReference type="ChEBI" id="CHEBI:15378"/>
        <dbReference type="ChEBI" id="CHEBI:30616"/>
        <dbReference type="ChEBI" id="CHEBI:43474"/>
        <dbReference type="ChEBI" id="CHEBI:57972"/>
        <dbReference type="ChEBI" id="CHEBI:70757"/>
        <dbReference type="ChEBI" id="CHEBI:83898"/>
        <dbReference type="ChEBI" id="CHEBI:456216"/>
        <dbReference type="EC" id="6.3.2.8"/>
    </reaction>
</comment>
<comment type="pathway">
    <text evidence="1">Cell wall biogenesis; peptidoglycan biosynthesis.</text>
</comment>
<comment type="subcellular location">
    <subcellularLocation>
        <location evidence="1">Cytoplasm</location>
    </subcellularLocation>
</comment>
<comment type="similarity">
    <text evidence="1">Belongs to the MurCDEF family.</text>
</comment>
<gene>
    <name evidence="1" type="primary">murC</name>
    <name type="ordered locus">cce_2373</name>
</gene>
<proteinExistence type="inferred from homology"/>
<accession>B1WQL2</accession>
<sequence length="518" mass="55960">MVKTVDFSGRPFHFIGIGGIGMSALAYVLAKRQLPVSGSDLRSTHITERLQGVGAHIFSRQEATNLELFNSSPERVLETVSVAVNGTQPSYPNGNGKTFSDSPSLLLQETLPQVICSTAIAHNNSEYAAAKEKGCPIFHRSDVLAALIRDYQSIAVAGTHGKTTTSSLIGYMLLKADLDPTIIVGGEVDAWEGNARIGAKGGYLVAEADESDGSLTKHYPNIGIVTNIELDHPDHYQTLDDVVKTFQIFETQCDLLIGCLDCETVASELTPAITYSLDPSKGADYTVQNVTSNHKGTFAEVWERGNYLGEIRLTIPGSHNLSNALAAIAVGRKLGLNFAVIADALFTFAGAKRRFEQRGQCNGITFIDDYAHHPSEIEATLSAARSKVDGETISRVVAIFQPHRYSRTATFLKEFATCFKDADLVILTDIYSAGEVNLHNISGQDLAEAVENNHSQVIYEPSLKGLPQVIPDLIKPGDLVLFLGAGNLNQIIPEMINTYHTASTQSTANAMVETSINC</sequence>
<reference key="1">
    <citation type="journal article" date="2008" name="Proc. Natl. Acad. Sci. U.S.A.">
        <title>The genome of Cyanothece 51142, a unicellular diazotrophic cyanobacterium important in the marine nitrogen cycle.</title>
        <authorList>
            <person name="Welsh E.A."/>
            <person name="Liberton M."/>
            <person name="Stoeckel J."/>
            <person name="Loh T."/>
            <person name="Elvitigala T."/>
            <person name="Wang C."/>
            <person name="Wollam A."/>
            <person name="Fulton R.S."/>
            <person name="Clifton S.W."/>
            <person name="Jacobs J.M."/>
            <person name="Aurora R."/>
            <person name="Ghosh B.K."/>
            <person name="Sherman L.A."/>
            <person name="Smith R.D."/>
            <person name="Wilson R.K."/>
            <person name="Pakrasi H.B."/>
        </authorList>
    </citation>
    <scope>NUCLEOTIDE SEQUENCE [LARGE SCALE GENOMIC DNA]</scope>
    <source>
        <strain>ATCC 51142 / BH68</strain>
    </source>
</reference>
<organism>
    <name type="scientific">Crocosphaera subtropica (strain ATCC 51142 / BH68)</name>
    <name type="common">Cyanothece sp. (strain ATCC 51142)</name>
    <dbReference type="NCBI Taxonomy" id="43989"/>
    <lineage>
        <taxon>Bacteria</taxon>
        <taxon>Bacillati</taxon>
        <taxon>Cyanobacteriota</taxon>
        <taxon>Cyanophyceae</taxon>
        <taxon>Oscillatoriophycideae</taxon>
        <taxon>Chroococcales</taxon>
        <taxon>Aphanothecaceae</taxon>
        <taxon>Crocosphaera</taxon>
        <taxon>Crocosphaera subtropica</taxon>
    </lineage>
</organism>
<dbReference type="EC" id="6.3.2.8" evidence="1"/>
<dbReference type="EMBL" id="CP000806">
    <property type="protein sequence ID" value="ACB51723.1"/>
    <property type="molecule type" value="Genomic_DNA"/>
</dbReference>
<dbReference type="RefSeq" id="WP_009544932.1">
    <property type="nucleotide sequence ID" value="NC_010546.1"/>
</dbReference>
<dbReference type="SMR" id="B1WQL2"/>
<dbReference type="STRING" id="43989.cce_2373"/>
<dbReference type="KEGG" id="cyt:cce_2373"/>
<dbReference type="eggNOG" id="COG0773">
    <property type="taxonomic scope" value="Bacteria"/>
</dbReference>
<dbReference type="HOGENOM" id="CLU_028104_2_2_3"/>
<dbReference type="OrthoDB" id="9804126at2"/>
<dbReference type="UniPathway" id="UPA00219"/>
<dbReference type="Proteomes" id="UP000001203">
    <property type="component" value="Chromosome circular"/>
</dbReference>
<dbReference type="GO" id="GO:0005737">
    <property type="term" value="C:cytoplasm"/>
    <property type="evidence" value="ECO:0007669"/>
    <property type="project" value="UniProtKB-SubCell"/>
</dbReference>
<dbReference type="GO" id="GO:0005524">
    <property type="term" value="F:ATP binding"/>
    <property type="evidence" value="ECO:0007669"/>
    <property type="project" value="UniProtKB-UniRule"/>
</dbReference>
<dbReference type="GO" id="GO:0008763">
    <property type="term" value="F:UDP-N-acetylmuramate-L-alanine ligase activity"/>
    <property type="evidence" value="ECO:0007669"/>
    <property type="project" value="UniProtKB-UniRule"/>
</dbReference>
<dbReference type="GO" id="GO:0051301">
    <property type="term" value="P:cell division"/>
    <property type="evidence" value="ECO:0007669"/>
    <property type="project" value="UniProtKB-KW"/>
</dbReference>
<dbReference type="GO" id="GO:0071555">
    <property type="term" value="P:cell wall organization"/>
    <property type="evidence" value="ECO:0007669"/>
    <property type="project" value="UniProtKB-KW"/>
</dbReference>
<dbReference type="GO" id="GO:0009252">
    <property type="term" value="P:peptidoglycan biosynthetic process"/>
    <property type="evidence" value="ECO:0007669"/>
    <property type="project" value="UniProtKB-UniRule"/>
</dbReference>
<dbReference type="GO" id="GO:0008360">
    <property type="term" value="P:regulation of cell shape"/>
    <property type="evidence" value="ECO:0007669"/>
    <property type="project" value="UniProtKB-KW"/>
</dbReference>
<dbReference type="Gene3D" id="3.90.190.20">
    <property type="entry name" value="Mur ligase, C-terminal domain"/>
    <property type="match status" value="1"/>
</dbReference>
<dbReference type="Gene3D" id="3.40.1190.10">
    <property type="entry name" value="Mur-like, catalytic domain"/>
    <property type="match status" value="1"/>
</dbReference>
<dbReference type="Gene3D" id="3.40.50.720">
    <property type="entry name" value="NAD(P)-binding Rossmann-like Domain"/>
    <property type="match status" value="1"/>
</dbReference>
<dbReference type="HAMAP" id="MF_00046">
    <property type="entry name" value="MurC"/>
    <property type="match status" value="1"/>
</dbReference>
<dbReference type="InterPro" id="IPR036565">
    <property type="entry name" value="Mur-like_cat_sf"/>
</dbReference>
<dbReference type="InterPro" id="IPR004101">
    <property type="entry name" value="Mur_ligase_C"/>
</dbReference>
<dbReference type="InterPro" id="IPR036615">
    <property type="entry name" value="Mur_ligase_C_dom_sf"/>
</dbReference>
<dbReference type="InterPro" id="IPR013221">
    <property type="entry name" value="Mur_ligase_cen"/>
</dbReference>
<dbReference type="InterPro" id="IPR000713">
    <property type="entry name" value="Mur_ligase_N"/>
</dbReference>
<dbReference type="InterPro" id="IPR050061">
    <property type="entry name" value="MurCDEF_pg_biosynth"/>
</dbReference>
<dbReference type="InterPro" id="IPR005758">
    <property type="entry name" value="UDP-N-AcMur_Ala_ligase_MurC"/>
</dbReference>
<dbReference type="NCBIfam" id="TIGR01082">
    <property type="entry name" value="murC"/>
    <property type="match status" value="1"/>
</dbReference>
<dbReference type="PANTHER" id="PTHR43445:SF3">
    <property type="entry name" value="UDP-N-ACETYLMURAMATE--L-ALANINE LIGASE"/>
    <property type="match status" value="1"/>
</dbReference>
<dbReference type="PANTHER" id="PTHR43445">
    <property type="entry name" value="UDP-N-ACETYLMURAMATE--L-ALANINE LIGASE-RELATED"/>
    <property type="match status" value="1"/>
</dbReference>
<dbReference type="Pfam" id="PF01225">
    <property type="entry name" value="Mur_ligase"/>
    <property type="match status" value="1"/>
</dbReference>
<dbReference type="Pfam" id="PF02875">
    <property type="entry name" value="Mur_ligase_C"/>
    <property type="match status" value="1"/>
</dbReference>
<dbReference type="Pfam" id="PF08245">
    <property type="entry name" value="Mur_ligase_M"/>
    <property type="match status" value="1"/>
</dbReference>
<dbReference type="SUPFAM" id="SSF51984">
    <property type="entry name" value="MurCD N-terminal domain"/>
    <property type="match status" value="1"/>
</dbReference>
<dbReference type="SUPFAM" id="SSF53623">
    <property type="entry name" value="MurD-like peptide ligases, catalytic domain"/>
    <property type="match status" value="1"/>
</dbReference>
<dbReference type="SUPFAM" id="SSF53244">
    <property type="entry name" value="MurD-like peptide ligases, peptide-binding domain"/>
    <property type="match status" value="1"/>
</dbReference>
<name>MURC_CROS5</name>
<protein>
    <recommendedName>
        <fullName evidence="1">UDP-N-acetylmuramate--L-alanine ligase</fullName>
        <ecNumber evidence="1">6.3.2.8</ecNumber>
    </recommendedName>
    <alternativeName>
        <fullName evidence="1">UDP-N-acetylmuramoyl-L-alanine synthetase</fullName>
    </alternativeName>
</protein>
<keyword id="KW-0067">ATP-binding</keyword>
<keyword id="KW-0131">Cell cycle</keyword>
<keyword id="KW-0132">Cell division</keyword>
<keyword id="KW-0133">Cell shape</keyword>
<keyword id="KW-0961">Cell wall biogenesis/degradation</keyword>
<keyword id="KW-0963">Cytoplasm</keyword>
<keyword id="KW-0436">Ligase</keyword>
<keyword id="KW-0547">Nucleotide-binding</keyword>
<keyword id="KW-0573">Peptidoglycan synthesis</keyword>
<keyword id="KW-1185">Reference proteome</keyword>
<evidence type="ECO:0000255" key="1">
    <source>
        <dbReference type="HAMAP-Rule" id="MF_00046"/>
    </source>
</evidence>